<keyword id="KW-0012">Acyltransferase</keyword>
<keyword id="KW-0963">Cytoplasm</keyword>
<keyword id="KW-0808">Transferase</keyword>
<feature type="chain" id="PRO_0000263211" description="Aspartate/glutamate leucyltransferase">
    <location>
        <begin position="1"/>
        <end position="258"/>
    </location>
</feature>
<gene>
    <name evidence="1" type="primary">bpt</name>
    <name type="ordered locus">RPC_2649</name>
</gene>
<accession>Q214I7</accession>
<evidence type="ECO:0000255" key="1">
    <source>
        <dbReference type="HAMAP-Rule" id="MF_00689"/>
    </source>
</evidence>
<reference key="1">
    <citation type="submission" date="2006-03" db="EMBL/GenBank/DDBJ databases">
        <title>Complete sequence of Rhodopseudomonas palustris BisB18.</title>
        <authorList>
            <consortium name="US DOE Joint Genome Institute"/>
            <person name="Copeland A."/>
            <person name="Lucas S."/>
            <person name="Lapidus A."/>
            <person name="Barry K."/>
            <person name="Detter J.C."/>
            <person name="Glavina del Rio T."/>
            <person name="Hammon N."/>
            <person name="Israni S."/>
            <person name="Dalin E."/>
            <person name="Tice H."/>
            <person name="Pitluck S."/>
            <person name="Chain P."/>
            <person name="Malfatti S."/>
            <person name="Shin M."/>
            <person name="Vergez L."/>
            <person name="Schmutz J."/>
            <person name="Larimer F."/>
            <person name="Land M."/>
            <person name="Hauser L."/>
            <person name="Pelletier D.A."/>
            <person name="Kyrpides N."/>
            <person name="Anderson I."/>
            <person name="Oda Y."/>
            <person name="Harwood C.S."/>
            <person name="Richardson P."/>
        </authorList>
    </citation>
    <scope>NUCLEOTIDE SEQUENCE [LARGE SCALE GENOMIC DNA]</scope>
    <source>
        <strain>BisB18</strain>
    </source>
</reference>
<dbReference type="EC" id="2.3.2.29" evidence="1"/>
<dbReference type="EMBL" id="CP000301">
    <property type="protein sequence ID" value="ABD88199.1"/>
    <property type="molecule type" value="Genomic_DNA"/>
</dbReference>
<dbReference type="SMR" id="Q214I7"/>
<dbReference type="STRING" id="316056.RPC_2649"/>
<dbReference type="KEGG" id="rpc:RPC_2649"/>
<dbReference type="eggNOG" id="COG2935">
    <property type="taxonomic scope" value="Bacteria"/>
</dbReference>
<dbReference type="HOGENOM" id="CLU_077607_1_0_5"/>
<dbReference type="OrthoDB" id="9782022at2"/>
<dbReference type="GO" id="GO:0005737">
    <property type="term" value="C:cytoplasm"/>
    <property type="evidence" value="ECO:0007669"/>
    <property type="project" value="UniProtKB-SubCell"/>
</dbReference>
<dbReference type="GO" id="GO:0004057">
    <property type="term" value="F:arginyl-tRNA--protein transferase activity"/>
    <property type="evidence" value="ECO:0007669"/>
    <property type="project" value="InterPro"/>
</dbReference>
<dbReference type="GO" id="GO:0008914">
    <property type="term" value="F:leucyl-tRNA--protein transferase activity"/>
    <property type="evidence" value="ECO:0007669"/>
    <property type="project" value="UniProtKB-UniRule"/>
</dbReference>
<dbReference type="GO" id="GO:0071596">
    <property type="term" value="P:ubiquitin-dependent protein catabolic process via the N-end rule pathway"/>
    <property type="evidence" value="ECO:0007669"/>
    <property type="project" value="InterPro"/>
</dbReference>
<dbReference type="HAMAP" id="MF_00689">
    <property type="entry name" value="Bpt"/>
    <property type="match status" value="1"/>
</dbReference>
<dbReference type="InterPro" id="IPR016181">
    <property type="entry name" value="Acyl_CoA_acyltransferase"/>
</dbReference>
<dbReference type="InterPro" id="IPR017138">
    <property type="entry name" value="Asp_Glu_LeuTrfase"/>
</dbReference>
<dbReference type="InterPro" id="IPR030700">
    <property type="entry name" value="N-end_Aminoacyl_Trfase"/>
</dbReference>
<dbReference type="InterPro" id="IPR007472">
    <property type="entry name" value="N-end_Aminoacyl_Trfase_C"/>
</dbReference>
<dbReference type="InterPro" id="IPR007471">
    <property type="entry name" value="N-end_Aminoacyl_Trfase_N"/>
</dbReference>
<dbReference type="NCBIfam" id="NF002342">
    <property type="entry name" value="PRK01305.1-3"/>
    <property type="match status" value="1"/>
</dbReference>
<dbReference type="NCBIfam" id="NF002343">
    <property type="entry name" value="PRK01305.1-4"/>
    <property type="match status" value="1"/>
</dbReference>
<dbReference type="NCBIfam" id="NF002346">
    <property type="entry name" value="PRK01305.2-3"/>
    <property type="match status" value="1"/>
</dbReference>
<dbReference type="PANTHER" id="PTHR21367">
    <property type="entry name" value="ARGININE-TRNA-PROTEIN TRANSFERASE 1"/>
    <property type="match status" value="1"/>
</dbReference>
<dbReference type="PANTHER" id="PTHR21367:SF1">
    <property type="entry name" value="ARGINYL-TRNA--PROTEIN TRANSFERASE 1"/>
    <property type="match status" value="1"/>
</dbReference>
<dbReference type="Pfam" id="PF04377">
    <property type="entry name" value="ATE_C"/>
    <property type="match status" value="1"/>
</dbReference>
<dbReference type="Pfam" id="PF04376">
    <property type="entry name" value="ATE_N"/>
    <property type="match status" value="1"/>
</dbReference>
<dbReference type="PIRSF" id="PIRSF037208">
    <property type="entry name" value="ATE_pro_prd"/>
    <property type="match status" value="1"/>
</dbReference>
<dbReference type="SUPFAM" id="SSF55729">
    <property type="entry name" value="Acyl-CoA N-acyltransferases (Nat)"/>
    <property type="match status" value="1"/>
</dbReference>
<sequence>MTQHSRDTPQFYLTAPSPCPYLPGRHERKVFTHLVGGKAGELNDLLTHGGFRRSQSIAYRPACDQCRACVSVRVVANEFRASRGQRKILARNADVIGELRSAVPTSEQYSVFRAYLDRRHRHGGMADMTVLDYAMMVEDSHVKTRIIEYRRRGPDSGITGRGEDLLAVALTDILNDGLSMVYSFFEPGEDSRSLGTFMILDHIARARRLGLPYVYLGYWIEGSKKMDYKGRYLPQQRLAPSGWIRVDASGESAVEPQD</sequence>
<protein>
    <recommendedName>
        <fullName evidence="1">Aspartate/glutamate leucyltransferase</fullName>
        <ecNumber evidence="1">2.3.2.29</ecNumber>
    </recommendedName>
</protein>
<organism>
    <name type="scientific">Rhodopseudomonas palustris (strain BisB18)</name>
    <dbReference type="NCBI Taxonomy" id="316056"/>
    <lineage>
        <taxon>Bacteria</taxon>
        <taxon>Pseudomonadati</taxon>
        <taxon>Pseudomonadota</taxon>
        <taxon>Alphaproteobacteria</taxon>
        <taxon>Hyphomicrobiales</taxon>
        <taxon>Nitrobacteraceae</taxon>
        <taxon>Rhodopseudomonas</taxon>
    </lineage>
</organism>
<name>BPT_RHOPB</name>
<comment type="function">
    <text evidence="1">Functions in the N-end rule pathway of protein degradation where it conjugates Leu from its aminoacyl-tRNA to the N-termini of proteins containing an N-terminal aspartate or glutamate.</text>
</comment>
<comment type="catalytic activity">
    <reaction evidence="1">
        <text>N-terminal L-glutamyl-[protein] + L-leucyl-tRNA(Leu) = N-terminal L-leucyl-L-glutamyl-[protein] + tRNA(Leu) + H(+)</text>
        <dbReference type="Rhea" id="RHEA:50412"/>
        <dbReference type="Rhea" id="RHEA-COMP:9613"/>
        <dbReference type="Rhea" id="RHEA-COMP:9622"/>
        <dbReference type="Rhea" id="RHEA-COMP:12664"/>
        <dbReference type="Rhea" id="RHEA-COMP:12668"/>
        <dbReference type="ChEBI" id="CHEBI:15378"/>
        <dbReference type="ChEBI" id="CHEBI:64721"/>
        <dbReference type="ChEBI" id="CHEBI:78442"/>
        <dbReference type="ChEBI" id="CHEBI:78494"/>
        <dbReference type="ChEBI" id="CHEBI:133041"/>
        <dbReference type="EC" id="2.3.2.29"/>
    </reaction>
</comment>
<comment type="catalytic activity">
    <reaction evidence="1">
        <text>N-terminal L-aspartyl-[protein] + L-leucyl-tRNA(Leu) = N-terminal L-leucyl-L-aspartyl-[protein] + tRNA(Leu) + H(+)</text>
        <dbReference type="Rhea" id="RHEA:50420"/>
        <dbReference type="Rhea" id="RHEA-COMP:9613"/>
        <dbReference type="Rhea" id="RHEA-COMP:9622"/>
        <dbReference type="Rhea" id="RHEA-COMP:12669"/>
        <dbReference type="Rhea" id="RHEA-COMP:12674"/>
        <dbReference type="ChEBI" id="CHEBI:15378"/>
        <dbReference type="ChEBI" id="CHEBI:64720"/>
        <dbReference type="ChEBI" id="CHEBI:78442"/>
        <dbReference type="ChEBI" id="CHEBI:78494"/>
        <dbReference type="ChEBI" id="CHEBI:133042"/>
        <dbReference type="EC" id="2.3.2.29"/>
    </reaction>
</comment>
<comment type="subcellular location">
    <subcellularLocation>
        <location evidence="1">Cytoplasm</location>
    </subcellularLocation>
</comment>
<comment type="similarity">
    <text evidence="1">Belongs to the R-transferase family. Bpt subfamily.</text>
</comment>
<proteinExistence type="inferred from homology"/>